<evidence type="ECO:0000255" key="1">
    <source>
        <dbReference type="HAMAP-Rule" id="MF_01394"/>
    </source>
</evidence>
<organism>
    <name type="scientific">Pseudomonas fluorescens (strain Pf0-1)</name>
    <dbReference type="NCBI Taxonomy" id="205922"/>
    <lineage>
        <taxon>Bacteria</taxon>
        <taxon>Pseudomonadati</taxon>
        <taxon>Pseudomonadota</taxon>
        <taxon>Gammaproteobacteria</taxon>
        <taxon>Pseudomonadales</taxon>
        <taxon>Pseudomonadaceae</taxon>
        <taxon>Pseudomonas</taxon>
    </lineage>
</organism>
<reference key="1">
    <citation type="journal article" date="2009" name="Genome Biol.">
        <title>Genomic and genetic analyses of diversity and plant interactions of Pseudomonas fluorescens.</title>
        <authorList>
            <person name="Silby M.W."/>
            <person name="Cerdeno-Tarraga A.M."/>
            <person name="Vernikos G.S."/>
            <person name="Giddens S.R."/>
            <person name="Jackson R.W."/>
            <person name="Preston G.M."/>
            <person name="Zhang X.-X."/>
            <person name="Moon C.D."/>
            <person name="Gehrig S.M."/>
            <person name="Godfrey S.A.C."/>
            <person name="Knight C.G."/>
            <person name="Malone J.G."/>
            <person name="Robinson Z."/>
            <person name="Spiers A.J."/>
            <person name="Harris S."/>
            <person name="Challis G.L."/>
            <person name="Yaxley A.M."/>
            <person name="Harris D."/>
            <person name="Seeger K."/>
            <person name="Murphy L."/>
            <person name="Rutter S."/>
            <person name="Squares R."/>
            <person name="Quail M.A."/>
            <person name="Saunders E."/>
            <person name="Mavromatis K."/>
            <person name="Brettin T.S."/>
            <person name="Bentley S.D."/>
            <person name="Hothersall J."/>
            <person name="Stephens E."/>
            <person name="Thomas C.M."/>
            <person name="Parkhill J."/>
            <person name="Levy S.B."/>
            <person name="Rainey P.B."/>
            <person name="Thomson N.R."/>
        </authorList>
    </citation>
    <scope>NUCLEOTIDE SEQUENCE [LARGE SCALE GENOMIC DNA]</scope>
    <source>
        <strain>Pf0-1</strain>
    </source>
</reference>
<protein>
    <recommendedName>
        <fullName evidence="1">NADH-quinone oxidoreductase subunit A</fullName>
        <ecNumber evidence="1">7.1.1.-</ecNumber>
    </recommendedName>
    <alternativeName>
        <fullName evidence="1">NADH dehydrogenase I subunit A</fullName>
    </alternativeName>
    <alternativeName>
        <fullName evidence="1">NDH-1 subunit A</fullName>
    </alternativeName>
    <alternativeName>
        <fullName evidence="1">NUO1</fullName>
    </alternativeName>
</protein>
<comment type="function">
    <text evidence="1">NDH-1 shuttles electrons from NADH, via FMN and iron-sulfur (Fe-S) centers, to quinones in the respiratory chain. The immediate electron acceptor for the enzyme in this species is believed to be ubiquinone. Couples the redox reaction to proton translocation (for every two electrons transferred, four hydrogen ions are translocated across the cytoplasmic membrane), and thus conserves the redox energy in a proton gradient.</text>
</comment>
<comment type="catalytic activity">
    <reaction evidence="1">
        <text>a quinone + NADH + 5 H(+)(in) = a quinol + NAD(+) + 4 H(+)(out)</text>
        <dbReference type="Rhea" id="RHEA:57888"/>
        <dbReference type="ChEBI" id="CHEBI:15378"/>
        <dbReference type="ChEBI" id="CHEBI:24646"/>
        <dbReference type="ChEBI" id="CHEBI:57540"/>
        <dbReference type="ChEBI" id="CHEBI:57945"/>
        <dbReference type="ChEBI" id="CHEBI:132124"/>
    </reaction>
</comment>
<comment type="subunit">
    <text evidence="1">NDH-1 is composed of 13 different subunits. Subunits NuoA, H, J, K, L, M, N constitute the membrane sector of the complex.</text>
</comment>
<comment type="subcellular location">
    <subcellularLocation>
        <location evidence="1">Cell inner membrane</location>
        <topology evidence="1">Multi-pass membrane protein</topology>
    </subcellularLocation>
</comment>
<comment type="similarity">
    <text evidence="1">Belongs to the complex I subunit 3 family.</text>
</comment>
<accession>Q3KA63</accession>
<dbReference type="EC" id="7.1.1.-" evidence="1"/>
<dbReference type="EMBL" id="CP000094">
    <property type="protein sequence ID" value="ABA75341.1"/>
    <property type="molecule type" value="Genomic_DNA"/>
</dbReference>
<dbReference type="RefSeq" id="WP_003223812.1">
    <property type="nucleotide sequence ID" value="NC_007492.2"/>
</dbReference>
<dbReference type="SMR" id="Q3KA63"/>
<dbReference type="KEGG" id="pfo:Pfl01_3603"/>
<dbReference type="eggNOG" id="COG0838">
    <property type="taxonomic scope" value="Bacteria"/>
</dbReference>
<dbReference type="HOGENOM" id="CLU_119549_2_1_6"/>
<dbReference type="Proteomes" id="UP000002704">
    <property type="component" value="Chromosome"/>
</dbReference>
<dbReference type="GO" id="GO:0030964">
    <property type="term" value="C:NADH dehydrogenase complex"/>
    <property type="evidence" value="ECO:0007669"/>
    <property type="project" value="TreeGrafter"/>
</dbReference>
<dbReference type="GO" id="GO:0005886">
    <property type="term" value="C:plasma membrane"/>
    <property type="evidence" value="ECO:0007669"/>
    <property type="project" value="UniProtKB-SubCell"/>
</dbReference>
<dbReference type="GO" id="GO:0008137">
    <property type="term" value="F:NADH dehydrogenase (ubiquinone) activity"/>
    <property type="evidence" value="ECO:0007669"/>
    <property type="project" value="InterPro"/>
</dbReference>
<dbReference type="GO" id="GO:0050136">
    <property type="term" value="F:NADH:ubiquinone reductase (non-electrogenic) activity"/>
    <property type="evidence" value="ECO:0007669"/>
    <property type="project" value="UniProtKB-UniRule"/>
</dbReference>
<dbReference type="GO" id="GO:0048038">
    <property type="term" value="F:quinone binding"/>
    <property type="evidence" value="ECO:0007669"/>
    <property type="project" value="UniProtKB-KW"/>
</dbReference>
<dbReference type="FunFam" id="1.20.58.1610:FF:000003">
    <property type="entry name" value="NADH-quinone oxidoreductase subunit A"/>
    <property type="match status" value="1"/>
</dbReference>
<dbReference type="Gene3D" id="1.20.58.1610">
    <property type="entry name" value="NADH:ubiquinone/plastoquinone oxidoreductase, chain 3"/>
    <property type="match status" value="1"/>
</dbReference>
<dbReference type="HAMAP" id="MF_01394">
    <property type="entry name" value="NDH1_NuoA"/>
    <property type="match status" value="1"/>
</dbReference>
<dbReference type="InterPro" id="IPR023043">
    <property type="entry name" value="NAD(P)H_OxRDtase_bac/plastid"/>
</dbReference>
<dbReference type="InterPro" id="IPR000440">
    <property type="entry name" value="NADH_UbQ/plastoQ_OxRdtase_su3"/>
</dbReference>
<dbReference type="InterPro" id="IPR038430">
    <property type="entry name" value="NDAH_ubi_oxred_su3_sf"/>
</dbReference>
<dbReference type="PANTHER" id="PTHR11058:SF21">
    <property type="entry name" value="NADH-QUINONE OXIDOREDUCTASE SUBUNIT A"/>
    <property type="match status" value="1"/>
</dbReference>
<dbReference type="PANTHER" id="PTHR11058">
    <property type="entry name" value="NADH-UBIQUINONE OXIDOREDUCTASE CHAIN 3"/>
    <property type="match status" value="1"/>
</dbReference>
<dbReference type="Pfam" id="PF00507">
    <property type="entry name" value="Oxidored_q4"/>
    <property type="match status" value="1"/>
</dbReference>
<sequence length="137" mass="15090">MPEATGLMAHNWGFAIFLLGVVGLCAFMLGVSSLLGSKAWGRSKNEPFESGMLPTGGARLRLSAKFYLVAMLFVIFDIEALFLFAWSVSVRESGWTGFVEALVFIAILLAGLVYLFRVGALDWAPEARRKRQAKLKQ</sequence>
<proteinExistence type="inferred from homology"/>
<name>NUOA_PSEPF</name>
<keyword id="KW-0997">Cell inner membrane</keyword>
<keyword id="KW-1003">Cell membrane</keyword>
<keyword id="KW-0472">Membrane</keyword>
<keyword id="KW-0520">NAD</keyword>
<keyword id="KW-0874">Quinone</keyword>
<keyword id="KW-1278">Translocase</keyword>
<keyword id="KW-0812">Transmembrane</keyword>
<keyword id="KW-1133">Transmembrane helix</keyword>
<keyword id="KW-0813">Transport</keyword>
<keyword id="KW-0830">Ubiquinone</keyword>
<gene>
    <name evidence="1" type="primary">nuoA</name>
    <name type="ordered locus">Pfl01_3603</name>
</gene>
<feature type="chain" id="PRO_0000362739" description="NADH-quinone oxidoreductase subunit A">
    <location>
        <begin position="1"/>
        <end position="137"/>
    </location>
</feature>
<feature type="transmembrane region" description="Helical" evidence="1">
    <location>
        <begin position="12"/>
        <end position="32"/>
    </location>
</feature>
<feature type="transmembrane region" description="Helical" evidence="1">
    <location>
        <begin position="66"/>
        <end position="86"/>
    </location>
</feature>
<feature type="transmembrane region" description="Helical" evidence="1">
    <location>
        <begin position="96"/>
        <end position="116"/>
    </location>
</feature>